<reference key="1">
    <citation type="journal article" date="1997" name="Nature">
        <title>The nucleotide sequence of Saccharomyces cerevisiae chromosome XII.</title>
        <authorList>
            <person name="Johnston M."/>
            <person name="Hillier L.W."/>
            <person name="Riles L."/>
            <person name="Albermann K."/>
            <person name="Andre B."/>
            <person name="Ansorge W."/>
            <person name="Benes V."/>
            <person name="Brueckner M."/>
            <person name="Delius H."/>
            <person name="Dubois E."/>
            <person name="Duesterhoeft A."/>
            <person name="Entian K.-D."/>
            <person name="Floeth M."/>
            <person name="Goffeau A."/>
            <person name="Hebling U."/>
            <person name="Heumann K."/>
            <person name="Heuss-Neitzel D."/>
            <person name="Hilbert H."/>
            <person name="Hilger F."/>
            <person name="Kleine K."/>
            <person name="Koetter P."/>
            <person name="Louis E.J."/>
            <person name="Messenguy F."/>
            <person name="Mewes H.-W."/>
            <person name="Miosga T."/>
            <person name="Moestl D."/>
            <person name="Mueller-Auer S."/>
            <person name="Nentwich U."/>
            <person name="Obermaier B."/>
            <person name="Piravandi E."/>
            <person name="Pohl T.M."/>
            <person name="Portetelle D."/>
            <person name="Purnelle B."/>
            <person name="Rechmann S."/>
            <person name="Rieger M."/>
            <person name="Rinke M."/>
            <person name="Rose M."/>
            <person name="Scharfe M."/>
            <person name="Scherens B."/>
            <person name="Scholler P."/>
            <person name="Schwager C."/>
            <person name="Schwarz S."/>
            <person name="Underwood A.P."/>
            <person name="Urrestarazu L.A."/>
            <person name="Vandenbol M."/>
            <person name="Verhasselt P."/>
            <person name="Vierendeels F."/>
            <person name="Voet M."/>
            <person name="Volckaert G."/>
            <person name="Voss H."/>
            <person name="Wambutt R."/>
            <person name="Wedler E."/>
            <person name="Wedler H."/>
            <person name="Zimmermann F.K."/>
            <person name="Zollner A."/>
            <person name="Hani J."/>
            <person name="Hoheisel J.D."/>
        </authorList>
    </citation>
    <scope>NUCLEOTIDE SEQUENCE [LARGE SCALE GENOMIC DNA]</scope>
    <source>
        <strain>ATCC 204508 / S288c</strain>
    </source>
</reference>
<reference key="2">
    <citation type="journal article" date="2014" name="G3 (Bethesda)">
        <title>The reference genome sequence of Saccharomyces cerevisiae: Then and now.</title>
        <authorList>
            <person name="Engel S.R."/>
            <person name="Dietrich F.S."/>
            <person name="Fisk D.G."/>
            <person name="Binkley G."/>
            <person name="Balakrishnan R."/>
            <person name="Costanzo M.C."/>
            <person name="Dwight S.S."/>
            <person name="Hitz B.C."/>
            <person name="Karra K."/>
            <person name="Nash R.S."/>
            <person name="Weng S."/>
            <person name="Wong E.D."/>
            <person name="Lloyd P."/>
            <person name="Skrzypek M.S."/>
            <person name="Miyasato S.R."/>
            <person name="Simison M."/>
            <person name="Cherry J.M."/>
        </authorList>
    </citation>
    <scope>GENOME REANNOTATION</scope>
    <source>
        <strain>ATCC 204508 / S288c</strain>
    </source>
</reference>
<reference key="3">
    <citation type="journal article" date="2007" name="Genome Res.">
        <title>Approaching a complete repository of sequence-verified protein-encoding clones for Saccharomyces cerevisiae.</title>
        <authorList>
            <person name="Hu Y."/>
            <person name="Rolfs A."/>
            <person name="Bhullar B."/>
            <person name="Murthy T.V.S."/>
            <person name="Zhu C."/>
            <person name="Berger M.F."/>
            <person name="Camargo A.A."/>
            <person name="Kelley F."/>
            <person name="McCarron S."/>
            <person name="Jepson D."/>
            <person name="Richardson A."/>
            <person name="Raphael J."/>
            <person name="Moreira D."/>
            <person name="Taycher E."/>
            <person name="Zuo D."/>
            <person name="Mohr S."/>
            <person name="Kane M.F."/>
            <person name="Williamson J."/>
            <person name="Simpson A.J.G."/>
            <person name="Bulyk M.L."/>
            <person name="Harlow E."/>
            <person name="Marsischky G."/>
            <person name="Kolodner R.D."/>
            <person name="LaBaer J."/>
        </authorList>
    </citation>
    <scope>NUCLEOTIDE SEQUENCE [GENOMIC DNA]</scope>
    <source>
        <strain>ATCC 204508 / S288c</strain>
    </source>
</reference>
<reference key="4">
    <citation type="journal article" date="2003" name="Nature">
        <title>Global analysis of protein expression in yeast.</title>
        <authorList>
            <person name="Ghaemmaghami S."/>
            <person name="Huh W.-K."/>
            <person name="Bower K."/>
            <person name="Howson R.W."/>
            <person name="Belle A."/>
            <person name="Dephoure N."/>
            <person name="O'Shea E.K."/>
            <person name="Weissman J.S."/>
        </authorList>
    </citation>
    <scope>LEVEL OF PROTEIN EXPRESSION [LARGE SCALE ANALYSIS]</scope>
</reference>
<reference key="5">
    <citation type="journal article" date="2007" name="Mol. Cell">
        <title>20S proteasome assembly is orchestrated by two distinct pairs of chaperones in yeast and in mammals.</title>
        <authorList>
            <person name="Le Tallec B."/>
            <person name="Barrault M.-B."/>
            <person name="Courbeyrette R."/>
            <person name="Guerois R."/>
            <person name="Marsolier-Kergoat M.-C."/>
            <person name="Peyroche A."/>
        </authorList>
    </citation>
    <scope>GENE NAME</scope>
    <scope>FUNCTION</scope>
    <scope>INTERACTION WITH POC4</scope>
    <scope>SUBUNIT</scope>
</reference>
<reference key="6">
    <citation type="journal article" date="2008" name="Nat. Struct. Mol. Biol.">
        <title>Crystal structure of a chaperone complex that contributes to the assembly of yeast 20S proteasomes.</title>
        <authorList>
            <person name="Yashiroda H."/>
            <person name="Mizushima T."/>
            <person name="Okamoto K."/>
            <person name="Kameyama T."/>
            <person name="Hayashi H."/>
            <person name="Kishimoto T."/>
            <person name="Niwa S."/>
            <person name="Kasahara M."/>
            <person name="Kurimoto E."/>
            <person name="Sakata E."/>
            <person name="Takagi K."/>
            <person name="Suzuki A."/>
            <person name="Hirano Y."/>
            <person name="Murata S."/>
            <person name="Kato K."/>
            <person name="Yamane T."/>
            <person name="Tanaka K."/>
        </authorList>
    </citation>
    <scope>X-RAY CRYSTALLOGRAPHY (1.96 ANGSTROMS) IN COMPLEX WITH POC4 AND PUP2</scope>
    <scope>FUNCTION</scope>
</reference>
<organism>
    <name type="scientific">Saccharomyces cerevisiae (strain ATCC 204508 / S288c)</name>
    <name type="common">Baker's yeast</name>
    <dbReference type="NCBI Taxonomy" id="559292"/>
    <lineage>
        <taxon>Eukaryota</taxon>
        <taxon>Fungi</taxon>
        <taxon>Dikarya</taxon>
        <taxon>Ascomycota</taxon>
        <taxon>Saccharomycotina</taxon>
        <taxon>Saccharomycetes</taxon>
        <taxon>Saccharomycetales</taxon>
        <taxon>Saccharomycetaceae</taxon>
        <taxon>Saccharomyces</taxon>
    </lineage>
</organism>
<feature type="chain" id="PRO_0000247202" description="Proteasome chaperone 3">
    <location>
        <begin position="1"/>
        <end position="179"/>
    </location>
</feature>
<feature type="strand" evidence="5">
    <location>
        <begin position="3"/>
        <end position="10"/>
    </location>
</feature>
<feature type="strand" evidence="5">
    <location>
        <begin position="26"/>
        <end position="33"/>
    </location>
</feature>
<feature type="strand" evidence="5">
    <location>
        <begin position="38"/>
        <end position="44"/>
    </location>
</feature>
<feature type="strand" evidence="5">
    <location>
        <begin position="50"/>
        <end position="56"/>
    </location>
</feature>
<feature type="helix" evidence="5">
    <location>
        <begin position="84"/>
        <end position="91"/>
    </location>
</feature>
<feature type="strand" evidence="5">
    <location>
        <begin position="95"/>
        <end position="102"/>
    </location>
</feature>
<feature type="helix" evidence="5">
    <location>
        <begin position="109"/>
        <end position="122"/>
    </location>
</feature>
<feature type="strand" evidence="5">
    <location>
        <begin position="140"/>
        <end position="145"/>
    </location>
</feature>
<feature type="helix" evidence="5">
    <location>
        <begin position="147"/>
        <end position="149"/>
    </location>
</feature>
<feature type="helix" evidence="5">
    <location>
        <begin position="162"/>
        <end position="176"/>
    </location>
</feature>
<sequence length="179" mass="20061">MISYEFQTHLPKGKDSSLNASSENKELYVQATHFNNTILLQIRLNGEMDSTYEVSSKGLNPILDINVPLAGNLGNTGGDYDDEEEEFVRDHLSDYQVVTKLGDSADPKVPVVCVQIAELYRRVILPEVSGTMAQDNMQFSLLISMSSKIWRATKEQSADDNDFGKLVFVLKCIKDMYAK</sequence>
<comment type="function">
    <text evidence="2 3">Involved in 20S proteasome assembly, facilitating the alpha-ring formation.</text>
</comment>
<comment type="subunit">
    <text evidence="2 3">Component of the 20S proteasome chaperone. Forms a heterodimer with POC4 that binds to proteasome precursors. Interacts with POP2.</text>
</comment>
<comment type="interaction">
    <interactant intactId="EBI-31959">
        <id>Q07951</id>
    </interactant>
    <interactant intactId="EBI-2343020">
        <id>Q12245</id>
        <label>POC4</label>
    </interactant>
    <organismsDiffer>false</organismsDiffer>
    <experiments>13</experiments>
</comment>
<comment type="miscellaneous">
    <text evidence="1">Present with 1820 molecules/cell in log phase SD medium.</text>
</comment>
<comment type="similarity">
    <text evidence="4">Belongs to the PSMG3 family.</text>
</comment>
<protein>
    <recommendedName>
        <fullName>Proteasome chaperone 3</fullName>
    </recommendedName>
    <alternativeName>
        <fullName>Increased recombination centers protein 25</fullName>
    </alternativeName>
</protein>
<evidence type="ECO:0000269" key="1">
    <source>
    </source>
</evidence>
<evidence type="ECO:0000269" key="2">
    <source>
    </source>
</evidence>
<evidence type="ECO:0000269" key="3">
    <source>
    </source>
</evidence>
<evidence type="ECO:0000305" key="4"/>
<evidence type="ECO:0007829" key="5">
    <source>
        <dbReference type="PDB" id="2Z5B"/>
    </source>
</evidence>
<dbReference type="EMBL" id="Z73193">
    <property type="protein sequence ID" value="CAA97544.1"/>
    <property type="molecule type" value="Genomic_DNA"/>
</dbReference>
<dbReference type="EMBL" id="AY558201">
    <property type="protein sequence ID" value="AAS56527.1"/>
    <property type="molecule type" value="Genomic_DNA"/>
</dbReference>
<dbReference type="EMBL" id="BK006945">
    <property type="protein sequence ID" value="DAA09339.1"/>
    <property type="molecule type" value="Genomic_DNA"/>
</dbReference>
<dbReference type="PIR" id="S64843">
    <property type="entry name" value="S64843"/>
</dbReference>
<dbReference type="RefSeq" id="NP_013121.1">
    <property type="nucleotide sequence ID" value="NM_001181908.1"/>
</dbReference>
<dbReference type="PDB" id="2Z5B">
    <property type="method" value="X-ray"/>
    <property type="resolution" value="1.96 A"/>
    <property type="chains" value="B=1-179"/>
</dbReference>
<dbReference type="PDB" id="2Z5C">
    <property type="method" value="X-ray"/>
    <property type="resolution" value="2.90 A"/>
    <property type="chains" value="B/E=1-179"/>
</dbReference>
<dbReference type="PDBsum" id="2Z5B"/>
<dbReference type="PDBsum" id="2Z5C"/>
<dbReference type="SMR" id="Q07951"/>
<dbReference type="BioGRID" id="31295">
    <property type="interactions" value="283"/>
</dbReference>
<dbReference type="ComplexPortal" id="CPX-8172">
    <property type="entry name" value="PBA3-PBA4 proteasomal chaperone complex"/>
</dbReference>
<dbReference type="DIP" id="DIP-4747N"/>
<dbReference type="FunCoup" id="Q07951">
    <property type="interactions" value="41"/>
</dbReference>
<dbReference type="IntAct" id="Q07951">
    <property type="interactions" value="4"/>
</dbReference>
<dbReference type="MINT" id="Q07951"/>
<dbReference type="STRING" id="4932.YLR021W"/>
<dbReference type="PaxDb" id="4932-YLR021W"/>
<dbReference type="PeptideAtlas" id="Q07951"/>
<dbReference type="EnsemblFungi" id="YLR021W_mRNA">
    <property type="protein sequence ID" value="YLR021W"/>
    <property type="gene ID" value="YLR021W"/>
</dbReference>
<dbReference type="GeneID" id="850708"/>
<dbReference type="KEGG" id="sce:YLR021W"/>
<dbReference type="AGR" id="SGD:S000004011"/>
<dbReference type="SGD" id="S000004011">
    <property type="gene designation" value="IRC25"/>
</dbReference>
<dbReference type="VEuPathDB" id="FungiDB:YLR021W"/>
<dbReference type="eggNOG" id="ENOG502S42X">
    <property type="taxonomic scope" value="Eukaryota"/>
</dbReference>
<dbReference type="HOGENOM" id="CLU_133914_0_0_1"/>
<dbReference type="InParanoid" id="Q07951"/>
<dbReference type="OMA" id="CTQIAEL"/>
<dbReference type="OrthoDB" id="3980246at2759"/>
<dbReference type="BioCyc" id="YEAST:G3O-32182-MONOMER"/>
<dbReference type="BioGRID-ORCS" id="850708">
    <property type="hits" value="5 hits in 10 CRISPR screens"/>
</dbReference>
<dbReference type="EvolutionaryTrace" id="Q07951"/>
<dbReference type="PRO" id="PR:Q07951"/>
<dbReference type="Proteomes" id="UP000002311">
    <property type="component" value="Chromosome XII"/>
</dbReference>
<dbReference type="RNAct" id="Q07951">
    <property type="molecule type" value="protein"/>
</dbReference>
<dbReference type="GO" id="GO:0005737">
    <property type="term" value="C:cytoplasm"/>
    <property type="evidence" value="ECO:0000314"/>
    <property type="project" value="SGD"/>
</dbReference>
<dbReference type="GO" id="GO:0005634">
    <property type="term" value="C:nucleus"/>
    <property type="evidence" value="ECO:0000314"/>
    <property type="project" value="SGD"/>
</dbReference>
<dbReference type="GO" id="GO:0032991">
    <property type="term" value="C:protein-containing complex"/>
    <property type="evidence" value="ECO:0000314"/>
    <property type="project" value="UniProtKB"/>
</dbReference>
<dbReference type="GO" id="GO:0051131">
    <property type="term" value="P:chaperone-mediated protein complex assembly"/>
    <property type="evidence" value="ECO:0000315"/>
    <property type="project" value="SGD"/>
</dbReference>
<dbReference type="GO" id="GO:0070481">
    <property type="term" value="P:nuclear-transcribed mRNA catabolic process, non-stop decay"/>
    <property type="evidence" value="ECO:0000315"/>
    <property type="project" value="SGD"/>
</dbReference>
<dbReference type="GO" id="GO:0043248">
    <property type="term" value="P:proteasome assembly"/>
    <property type="evidence" value="ECO:0000315"/>
    <property type="project" value="SGD"/>
</dbReference>
<dbReference type="FunFam" id="3.30.230.90:FF:000001">
    <property type="entry name" value="Proteasome chaperone 3"/>
    <property type="match status" value="1"/>
</dbReference>
<dbReference type="Gene3D" id="3.30.230.90">
    <property type="match status" value="1"/>
</dbReference>
<dbReference type="InterPro" id="IPR053720">
    <property type="entry name" value="Psm_Assembly_Chaperone"/>
</dbReference>
<dbReference type="InterPro" id="IPR018854">
    <property type="entry name" value="Psome_chaperone_3/4"/>
</dbReference>
<dbReference type="Pfam" id="PF10448">
    <property type="entry name" value="POC3_POC4"/>
    <property type="match status" value="1"/>
</dbReference>
<proteinExistence type="evidence at protein level"/>
<accession>Q07951</accession>
<accession>D6VY23</accession>
<name>POC3_YEAST</name>
<gene>
    <name type="primary">IRC25</name>
    <name type="synonym">DMP2</name>
    <name type="synonym">POC3</name>
    <name type="ordered locus">YLR021W</name>
</gene>
<keyword id="KW-0002">3D-structure</keyword>
<keyword id="KW-0143">Chaperone</keyword>
<keyword id="KW-1185">Reference proteome</keyword>